<organism>
    <name type="scientific">Myxoma virus (strain Lausanne)</name>
    <name type="common">MYXV</name>
    <dbReference type="NCBI Taxonomy" id="31530"/>
    <lineage>
        <taxon>Viruses</taxon>
        <taxon>Varidnaviria</taxon>
        <taxon>Bamfordvirae</taxon>
        <taxon>Nucleocytoviricota</taxon>
        <taxon>Pokkesviricetes</taxon>
        <taxon>Chitovirales</taxon>
        <taxon>Poxviridae</taxon>
        <taxon>Chordopoxvirinae</taxon>
        <taxon>Leporipoxvirus</taxon>
        <taxon>Myxoma virus</taxon>
    </lineage>
</organism>
<feature type="chain" id="PRO_0000396001" description="E3 ubiquitin-protein ligase LAP">
    <location>
        <begin position="1"/>
        <end position="206"/>
    </location>
</feature>
<feature type="topological domain" description="Cytoplasmic" evidence="2">
    <location>
        <begin position="1"/>
        <end position="93"/>
    </location>
</feature>
<feature type="transmembrane region" description="Helical" evidence="2">
    <location>
        <begin position="94"/>
        <end position="114"/>
    </location>
</feature>
<feature type="topological domain" description="Lumenal" evidence="2">
    <location>
        <begin position="115"/>
        <end position="129"/>
    </location>
</feature>
<feature type="transmembrane region" description="Helical" evidence="2">
    <location>
        <begin position="130"/>
        <end position="150"/>
    </location>
</feature>
<feature type="topological domain" description="Cytoplasmic" evidence="2">
    <location>
        <begin position="151"/>
        <end position="206"/>
    </location>
</feature>
<feature type="zinc finger region" description="RING-CH-type" evidence="3">
    <location>
        <begin position="15"/>
        <end position="75"/>
    </location>
</feature>
<feature type="binding site" evidence="3">
    <location>
        <position position="23"/>
    </location>
    <ligand>
        <name>Zn(2+)</name>
        <dbReference type="ChEBI" id="CHEBI:29105"/>
        <label>1</label>
    </ligand>
</feature>
<feature type="binding site" evidence="3">
    <location>
        <position position="26"/>
    </location>
    <ligand>
        <name>Zn(2+)</name>
        <dbReference type="ChEBI" id="CHEBI:29105"/>
        <label>1</label>
    </ligand>
</feature>
<feature type="binding site" evidence="3">
    <location>
        <position position="37"/>
    </location>
    <ligand>
        <name>Zn(2+)</name>
        <dbReference type="ChEBI" id="CHEBI:29105"/>
        <label>2</label>
    </ligand>
</feature>
<feature type="binding site" evidence="3">
    <location>
        <position position="39"/>
    </location>
    <ligand>
        <name>Zn(2+)</name>
        <dbReference type="ChEBI" id="CHEBI:29105"/>
        <label>2</label>
    </ligand>
</feature>
<feature type="binding site" evidence="3">
    <location>
        <position position="47"/>
    </location>
    <ligand>
        <name>Zn(2+)</name>
        <dbReference type="ChEBI" id="CHEBI:29105"/>
        <label>1</label>
    </ligand>
</feature>
<feature type="binding site" evidence="3">
    <location>
        <position position="50"/>
    </location>
    <ligand>
        <name>Zn(2+)</name>
        <dbReference type="ChEBI" id="CHEBI:29105"/>
        <label>1</label>
    </ligand>
</feature>
<feature type="binding site" evidence="3">
    <location>
        <position position="65"/>
    </location>
    <ligand>
        <name>Zn(2+)</name>
        <dbReference type="ChEBI" id="CHEBI:29105"/>
        <label>2</label>
    </ligand>
</feature>
<feature type="binding site" evidence="3">
    <location>
        <position position="68"/>
    </location>
    <ligand>
        <name>Zn(2+)</name>
        <dbReference type="ChEBI" id="CHEBI:29105"/>
        <label>2</label>
    </ligand>
</feature>
<comment type="function">
    <text evidence="1 4 5">E3 ubiquitin-protein ligase which promotes ubiquitination and subsequent degradation of host MHC-I and CD4 molecules, presumably to prevent lysis of infected cells by cytotoxic T-lymphocytes and NK cell. Binds target molecules through transmembrane interaction. The result of this ubiquitination is the enhancement of the endocytosis of the target chain and the delivery to the lysosome, where it is proteolytically destroyed (By similarity).</text>
</comment>
<comment type="catalytic activity">
    <reaction>
        <text>S-ubiquitinyl-[E2 ubiquitin-conjugating enzyme]-L-cysteine + [acceptor protein]-L-lysine = [E2 ubiquitin-conjugating enzyme]-L-cysteine + N(6)-ubiquitinyl-[acceptor protein]-L-lysine.</text>
        <dbReference type="EC" id="2.3.2.27"/>
    </reaction>
</comment>
<comment type="subcellular location">
    <subcellularLocation>
        <location evidence="6">Host membrane</location>
        <topology evidence="6">Multi-pass membrane protein</topology>
    </subcellularLocation>
    <subcellularLocation>
        <location evidence="5">Host Golgi apparatus</location>
        <location evidence="5">Host trans-Golgi network membrane</location>
    </subcellularLocation>
    <subcellularLocation>
        <location evidence="5">Host early endosome membrane</location>
    </subcellularLocation>
</comment>
<comment type="domain">
    <text evidence="3">The RING-CH-type zinc finger domain is required for E3 ligase activity.</text>
</comment>
<comment type="similarity">
    <text evidence="6">Belongs to the poxviridae LAP protein family.</text>
</comment>
<proteinExistence type="inferred from homology"/>
<keyword id="KW-1039">Host endosome</keyword>
<keyword id="KW-1040">Host Golgi apparatus</keyword>
<keyword id="KW-1043">Host membrane</keyword>
<keyword id="KW-0945">Host-virus interaction</keyword>
<keyword id="KW-1080">Inhibition of host adaptive immune response by virus</keyword>
<keyword id="KW-1115">Inhibition of host MHC class I molecule presentation by virus</keyword>
<keyword id="KW-0472">Membrane</keyword>
<keyword id="KW-0479">Metal-binding</keyword>
<keyword id="KW-1128">Modulation of host ubiquitin pathway by viral E3 ligase</keyword>
<keyword id="KW-1130">Modulation of host ubiquitin pathway by virus</keyword>
<keyword id="KW-1185">Reference proteome</keyword>
<keyword id="KW-0808">Transferase</keyword>
<keyword id="KW-0812">Transmembrane</keyword>
<keyword id="KW-1133">Transmembrane helix</keyword>
<keyword id="KW-0833">Ubl conjugation pathway</keyword>
<keyword id="KW-0899">Viral immunoevasion</keyword>
<keyword id="KW-0862">Zinc</keyword>
<keyword id="KW-0863">Zinc-finger</keyword>
<protein>
    <recommendedName>
        <fullName>E3 ubiquitin-protein ligase LAP</fullName>
        <ecNumber>2.3.2.27</ecNumber>
    </recommendedName>
    <alternativeName>
        <fullName>Leukemia associated protein</fullName>
        <shortName>LAP</shortName>
    </alternativeName>
    <alternativeName>
        <fullName evidence="6">RING-type E3 ubiquitin transferase LAP</fullName>
    </alternativeName>
</protein>
<dbReference type="EC" id="2.3.2.27"/>
<dbReference type="EMBL" id="AF170726">
    <property type="protein sequence ID" value="AAF15041.2"/>
    <property type="molecule type" value="Genomic_DNA"/>
</dbReference>
<dbReference type="EMBL" id="AF229033">
    <property type="protein sequence ID" value="AAK00734.1"/>
    <property type="molecule type" value="Genomic_DNA"/>
</dbReference>
<dbReference type="RefSeq" id="NP_051866.2">
    <property type="nucleotide sequence ID" value="NC_001132.2"/>
</dbReference>
<dbReference type="GeneID" id="932099"/>
<dbReference type="KEGG" id="vg:932099"/>
<dbReference type="Proteomes" id="UP000000867">
    <property type="component" value="Segment"/>
</dbReference>
<dbReference type="GO" id="GO:0044174">
    <property type="term" value="C:host cell endosome"/>
    <property type="evidence" value="ECO:0007669"/>
    <property type="project" value="UniProtKB-KW"/>
</dbReference>
<dbReference type="GO" id="GO:0044177">
    <property type="term" value="C:host cell Golgi apparatus"/>
    <property type="evidence" value="ECO:0007669"/>
    <property type="project" value="UniProtKB-SubCell"/>
</dbReference>
<dbReference type="GO" id="GO:0033644">
    <property type="term" value="C:host cell membrane"/>
    <property type="evidence" value="ECO:0007669"/>
    <property type="project" value="UniProtKB-SubCell"/>
</dbReference>
<dbReference type="GO" id="GO:0016020">
    <property type="term" value="C:membrane"/>
    <property type="evidence" value="ECO:0007669"/>
    <property type="project" value="UniProtKB-KW"/>
</dbReference>
<dbReference type="GO" id="GO:0004842">
    <property type="term" value="F:ubiquitin-protein transferase activity"/>
    <property type="evidence" value="ECO:0007669"/>
    <property type="project" value="TreeGrafter"/>
</dbReference>
<dbReference type="GO" id="GO:0008270">
    <property type="term" value="F:zinc ion binding"/>
    <property type="evidence" value="ECO:0007669"/>
    <property type="project" value="UniProtKB-KW"/>
</dbReference>
<dbReference type="GO" id="GO:0016567">
    <property type="term" value="P:protein ubiquitination"/>
    <property type="evidence" value="ECO:0007669"/>
    <property type="project" value="TreeGrafter"/>
</dbReference>
<dbReference type="GO" id="GO:0039648">
    <property type="term" value="P:symbiont-mediated perturbation of host ubiquitin-like protein modification"/>
    <property type="evidence" value="ECO:0007669"/>
    <property type="project" value="UniProtKB-KW"/>
</dbReference>
<dbReference type="GO" id="GO:0046776">
    <property type="term" value="P:symbiont-mediated suppression of host antigen processing and presentation of peptide antigen via MHC class I"/>
    <property type="evidence" value="ECO:0007669"/>
    <property type="project" value="UniProtKB-KW"/>
</dbReference>
<dbReference type="Gene3D" id="3.30.40.10">
    <property type="entry name" value="Zinc/RING finger domain, C3HC4 (zinc finger)"/>
    <property type="match status" value="1"/>
</dbReference>
<dbReference type="InterPro" id="IPR011016">
    <property type="entry name" value="Znf_RING-CH"/>
</dbReference>
<dbReference type="InterPro" id="IPR013083">
    <property type="entry name" value="Znf_RING/FYVE/PHD"/>
</dbReference>
<dbReference type="PANTHER" id="PTHR46065">
    <property type="entry name" value="E3 UBIQUITIN-PROTEIN LIGASE MARCH 2/3 FAMILY MEMBER"/>
    <property type="match status" value="1"/>
</dbReference>
<dbReference type="PANTHER" id="PTHR46065:SF3">
    <property type="entry name" value="FI20425P1"/>
    <property type="match status" value="1"/>
</dbReference>
<dbReference type="Pfam" id="PF12906">
    <property type="entry name" value="RINGv"/>
    <property type="match status" value="1"/>
</dbReference>
<dbReference type="SMART" id="SM00744">
    <property type="entry name" value="RINGv"/>
    <property type="match status" value="1"/>
</dbReference>
<dbReference type="SUPFAM" id="SSF57850">
    <property type="entry name" value="RING/U-box"/>
    <property type="match status" value="1"/>
</dbReference>
<dbReference type="PROSITE" id="PS51292">
    <property type="entry name" value="ZF_RING_CH"/>
    <property type="match status" value="1"/>
</dbReference>
<evidence type="ECO:0000250" key="1"/>
<evidence type="ECO:0000255" key="2"/>
<evidence type="ECO:0000255" key="3">
    <source>
        <dbReference type="PROSITE-ProRule" id="PRU00623"/>
    </source>
</evidence>
<evidence type="ECO:0000269" key="4">
    <source>
    </source>
</evidence>
<evidence type="ECO:0000269" key="5">
    <source>
    </source>
</evidence>
<evidence type="ECO:0000305" key="6"/>
<gene>
    <name type="primary">LAP</name>
    <name type="ordered locus">m153R</name>
</gene>
<sequence length="206" mass="23258">MATVVNMDTVVNLDDVSLADKCCWICKEACDIVPNYCKCRGDNKIVHKECLEEWINTDVVKNKSCAICESPYNLKRRYKKITKWRCYKRDCHDSLLVNMSLCLIVGGMGGYLLISTEIVKLIASEEVSNIAKVFLVSASMGPFMVSALTMVRACIDCRTYFIATRERNTIHEVAEMEDVEEVEEVNDDDGDEYVDAVEEIVVESPA</sequence>
<accession>Q997C2</accession>
<accession>Q9Q8F2</accession>
<organismHost>
    <name type="scientific">Oryctolagus cuniculus</name>
    <name type="common">Rabbit</name>
    <dbReference type="NCBI Taxonomy" id="9986"/>
</organismHost>
<reference key="1">
    <citation type="journal article" date="2002" name="J. Virol.">
        <title>Myxoma virus leukemia-associated protein is responsible for major histocompatibility complex class I and Fas-CD95 down-regulation and defines scrapins, a new group of surface cellular receptor abductor proteins.</title>
        <authorList>
            <person name="Guerin J.L."/>
            <person name="Gelfi J."/>
            <person name="Boullier S."/>
            <person name="Delverdier M."/>
            <person name="Bellanger F.A."/>
            <person name="Bertagnoli S."/>
            <person name="Drexler I."/>
            <person name="Sutter G."/>
            <person name="Messud-Petit F."/>
        </authorList>
    </citation>
    <scope>NUCLEOTIDE SEQUENCE [GENOMIC DNA]</scope>
    <source>
        <strain>Toulouse 1</strain>
    </source>
</reference>
<reference key="2">
    <citation type="journal article" date="1999" name="Virology">
        <title>The complete DNA sequence of myxoma virus.</title>
        <authorList>
            <person name="Cameron C."/>
            <person name="Hota-Mitchell S."/>
            <person name="Chen L."/>
            <person name="Barrett J.W."/>
            <person name="Cao J.-X."/>
            <person name="Macaulay C."/>
            <person name="Willer D.O."/>
            <person name="Evans D.H."/>
            <person name="McFadden G."/>
        </authorList>
    </citation>
    <scope>NUCLEOTIDE SEQUENCE [LARGE SCALE GENOMIC DNA]</scope>
</reference>
<reference key="3">
    <citation type="journal article" date="2003" name="J. Virol.">
        <title>The PHD/LAP-domain protein M153R of myxomavirus is a ubiquitin ligase that induces the rapid internalization and lysosomal destruction of CD4.</title>
        <authorList>
            <person name="Mansouri M."/>
            <person name="Bartee E."/>
            <person name="Gouveia K."/>
            <person name="Hovey Nerenberg B.T."/>
            <person name="Barrett J."/>
            <person name="Thomas L."/>
            <person name="Thomas G."/>
            <person name="McFadden G."/>
            <person name="Fruh K."/>
        </authorList>
    </citation>
    <scope>FUNCTION</scope>
</reference>
<reference key="4">
    <citation type="journal article" date="2005" name="Virology">
        <title>The poxviral scrapin MV-LAP requires a myxoma viral infection context to efficiently downregulate MHC-I molecules.</title>
        <authorList>
            <person name="Collin N."/>
            <person name="Guerin J.L."/>
            <person name="Drexler I."/>
            <person name="Blanie S."/>
            <person name="Gelfi J."/>
            <person name="Boullier S."/>
            <person name="Foucras G."/>
            <person name="Sutter G."/>
            <person name="Messud-Petit F."/>
        </authorList>
    </citation>
    <scope>FUNCTION</scope>
    <scope>SUBCELLULAR LOCATION</scope>
</reference>
<name>LAP_MYXVL</name>